<dbReference type="EMBL" id="CP000436">
    <property type="protein sequence ID" value="ABI24340.1"/>
    <property type="molecule type" value="Genomic_DNA"/>
</dbReference>
<dbReference type="SMR" id="Q0I163"/>
<dbReference type="KEGG" id="hso:HS_0059"/>
<dbReference type="eggNOG" id="COG0087">
    <property type="taxonomic scope" value="Bacteria"/>
</dbReference>
<dbReference type="HOGENOM" id="CLU_044142_4_1_6"/>
<dbReference type="GO" id="GO:0022625">
    <property type="term" value="C:cytosolic large ribosomal subunit"/>
    <property type="evidence" value="ECO:0007669"/>
    <property type="project" value="TreeGrafter"/>
</dbReference>
<dbReference type="GO" id="GO:0019843">
    <property type="term" value="F:rRNA binding"/>
    <property type="evidence" value="ECO:0007669"/>
    <property type="project" value="UniProtKB-UniRule"/>
</dbReference>
<dbReference type="GO" id="GO:0003735">
    <property type="term" value="F:structural constituent of ribosome"/>
    <property type="evidence" value="ECO:0007669"/>
    <property type="project" value="InterPro"/>
</dbReference>
<dbReference type="GO" id="GO:0006412">
    <property type="term" value="P:translation"/>
    <property type="evidence" value="ECO:0007669"/>
    <property type="project" value="UniProtKB-UniRule"/>
</dbReference>
<dbReference type="FunFam" id="2.40.30.10:FF:000004">
    <property type="entry name" value="50S ribosomal protein L3"/>
    <property type="match status" value="1"/>
</dbReference>
<dbReference type="FunFam" id="3.30.160.810:FF:000001">
    <property type="entry name" value="50S ribosomal protein L3"/>
    <property type="match status" value="1"/>
</dbReference>
<dbReference type="Gene3D" id="3.30.160.810">
    <property type="match status" value="1"/>
</dbReference>
<dbReference type="Gene3D" id="2.40.30.10">
    <property type="entry name" value="Translation factors"/>
    <property type="match status" value="1"/>
</dbReference>
<dbReference type="HAMAP" id="MF_01325_B">
    <property type="entry name" value="Ribosomal_uL3_B"/>
    <property type="match status" value="1"/>
</dbReference>
<dbReference type="InterPro" id="IPR000597">
    <property type="entry name" value="Ribosomal_uL3"/>
</dbReference>
<dbReference type="InterPro" id="IPR019927">
    <property type="entry name" value="Ribosomal_uL3_bac/org-type"/>
</dbReference>
<dbReference type="InterPro" id="IPR019926">
    <property type="entry name" value="Ribosomal_uL3_CS"/>
</dbReference>
<dbReference type="InterPro" id="IPR009000">
    <property type="entry name" value="Transl_B-barrel_sf"/>
</dbReference>
<dbReference type="NCBIfam" id="TIGR03625">
    <property type="entry name" value="L3_bact"/>
    <property type="match status" value="1"/>
</dbReference>
<dbReference type="PANTHER" id="PTHR11229">
    <property type="entry name" value="50S RIBOSOMAL PROTEIN L3"/>
    <property type="match status" value="1"/>
</dbReference>
<dbReference type="PANTHER" id="PTHR11229:SF16">
    <property type="entry name" value="LARGE RIBOSOMAL SUBUNIT PROTEIN UL3C"/>
    <property type="match status" value="1"/>
</dbReference>
<dbReference type="Pfam" id="PF00297">
    <property type="entry name" value="Ribosomal_L3"/>
    <property type="match status" value="1"/>
</dbReference>
<dbReference type="SUPFAM" id="SSF50447">
    <property type="entry name" value="Translation proteins"/>
    <property type="match status" value="1"/>
</dbReference>
<dbReference type="PROSITE" id="PS00474">
    <property type="entry name" value="RIBOSOMAL_L3"/>
    <property type="match status" value="1"/>
</dbReference>
<comment type="function">
    <text evidence="1">One of the primary rRNA binding proteins, it binds directly near the 3'-end of the 23S rRNA, where it nucleates assembly of the 50S subunit.</text>
</comment>
<comment type="subunit">
    <text evidence="1">Part of the 50S ribosomal subunit. Forms a cluster with proteins L14 and L19.</text>
</comment>
<comment type="PTM">
    <text evidence="1">Methylated by PrmB.</text>
</comment>
<comment type="similarity">
    <text evidence="1">Belongs to the universal ribosomal protein uL3 family.</text>
</comment>
<keyword id="KW-0488">Methylation</keyword>
<keyword id="KW-0687">Ribonucleoprotein</keyword>
<keyword id="KW-0689">Ribosomal protein</keyword>
<keyword id="KW-0694">RNA-binding</keyword>
<keyword id="KW-0699">rRNA-binding</keyword>
<organism>
    <name type="scientific">Histophilus somni (strain 129Pt)</name>
    <name type="common">Haemophilus somnus</name>
    <dbReference type="NCBI Taxonomy" id="205914"/>
    <lineage>
        <taxon>Bacteria</taxon>
        <taxon>Pseudomonadati</taxon>
        <taxon>Pseudomonadota</taxon>
        <taxon>Gammaproteobacteria</taxon>
        <taxon>Pasteurellales</taxon>
        <taxon>Pasteurellaceae</taxon>
        <taxon>Histophilus</taxon>
    </lineage>
</organism>
<sequence length="208" mass="22501">MIGLVGRKVGMTRIFNEDGVSIPVTVIEIEANRVTQVKTLENDGYTAVQVTTGFKKASRVTKPEAGHFVKAGVEAGRGLWEFRTEGEEFTLGQEINVDIFTDVKKVDVTGTSKGKGFQGGVKRWNFRTQDATHGNSLSHRVLGSIGQNQTPGRVFKGKKMAGHLGAERVTVQSLEIVRVDVERKLLLVKGSVPGATNSDVIVKPAVKA</sequence>
<reference key="1">
    <citation type="journal article" date="2007" name="J. Bacteriol.">
        <title>Complete genome sequence of Haemophilus somnus (Histophilus somni) strain 129Pt and comparison to Haemophilus ducreyi 35000HP and Haemophilus influenzae Rd.</title>
        <authorList>
            <person name="Challacombe J.F."/>
            <person name="Duncan A.J."/>
            <person name="Brettin T.S."/>
            <person name="Bruce D."/>
            <person name="Chertkov O."/>
            <person name="Detter J.C."/>
            <person name="Han C.S."/>
            <person name="Misra M."/>
            <person name="Richardson P."/>
            <person name="Tapia R."/>
            <person name="Thayer N."/>
            <person name="Xie G."/>
            <person name="Inzana T.J."/>
        </authorList>
    </citation>
    <scope>NUCLEOTIDE SEQUENCE [LARGE SCALE GENOMIC DNA]</scope>
    <source>
        <strain>129Pt</strain>
    </source>
</reference>
<protein>
    <recommendedName>
        <fullName evidence="1">Large ribosomal subunit protein uL3</fullName>
    </recommendedName>
    <alternativeName>
        <fullName evidence="2">50S ribosomal protein L3</fullName>
    </alternativeName>
</protein>
<feature type="chain" id="PRO_1000052059" description="Large ribosomal subunit protein uL3">
    <location>
        <begin position="1"/>
        <end position="208"/>
    </location>
</feature>
<feature type="modified residue" description="N5-methylglutamine" evidence="1">
    <location>
        <position position="149"/>
    </location>
</feature>
<name>RL3_HISS1</name>
<evidence type="ECO:0000255" key="1">
    <source>
        <dbReference type="HAMAP-Rule" id="MF_01325"/>
    </source>
</evidence>
<evidence type="ECO:0000305" key="2"/>
<gene>
    <name evidence="1" type="primary">rplC</name>
    <name type="ordered locus">HS_0059</name>
</gene>
<proteinExistence type="inferred from homology"/>
<accession>Q0I163</accession>